<keyword id="KW-0004">4Fe-4S</keyword>
<keyword id="KW-0903">Direct protein sequencing</keyword>
<keyword id="KW-0408">Iron</keyword>
<keyword id="KW-0411">Iron-sulfur</keyword>
<keyword id="KW-0479">Metal-binding</keyword>
<keyword id="KW-0484">Methanogenesis</keyword>
<keyword id="KW-0533">Nickel</keyword>
<keyword id="KW-0560">Oxidoreductase</keyword>
<keyword id="KW-0677">Repeat</keyword>
<comment type="function">
    <text evidence="1">Part of the ACDS complex that catalyzes the reversible cleavage of acetyl-CoA, allowing growth on acetate as sole source of carbon and energy. The alpha-epsilon subcomponent functions as a carbon monoxide dehydrogenase.</text>
</comment>
<comment type="catalytic activity">
    <reaction evidence="1">
        <text>CO + 2 oxidized [2Fe-2S]-[ferredoxin] + H2O = 2 reduced [2Fe-2S]-[ferredoxin] + CO2 + 2 H(+)</text>
        <dbReference type="Rhea" id="RHEA:21040"/>
        <dbReference type="Rhea" id="RHEA-COMP:10000"/>
        <dbReference type="Rhea" id="RHEA-COMP:10001"/>
        <dbReference type="ChEBI" id="CHEBI:15377"/>
        <dbReference type="ChEBI" id="CHEBI:15378"/>
        <dbReference type="ChEBI" id="CHEBI:16526"/>
        <dbReference type="ChEBI" id="CHEBI:17245"/>
        <dbReference type="ChEBI" id="CHEBI:33737"/>
        <dbReference type="ChEBI" id="CHEBI:33738"/>
        <dbReference type="EC" id="1.2.7.4"/>
    </reaction>
</comment>
<comment type="cofactor">
    <cofactor evidence="1">
        <name>[4Fe-4S] cluster</name>
        <dbReference type="ChEBI" id="CHEBI:49883"/>
    </cofactor>
    <text evidence="1">Binds 7 [4Fe-4S] clusters per heterotetramer.</text>
</comment>
<comment type="cofactor">
    <cofactor evidence="1">
        <name>[Ni-4Fe-4S] cluster</name>
        <dbReference type="ChEBI" id="CHEBI:47739"/>
    </cofactor>
    <text evidence="1">Binds 2 [Ni-4Fe-4S] clusters per heterotetramer.</text>
</comment>
<comment type="biophysicochemical properties">
    <phDependence>
        <text>Optimum pH is 8-9.</text>
    </phDependence>
</comment>
<comment type="pathway">
    <text evidence="1">One-carbon metabolism; methanogenesis from acetate.</text>
</comment>
<comment type="subunit">
    <text evidence="1">Heterotetramer of two alpha and two epsilon subunits. The ACDS complex is made up of alpha, epsilon, beta, gamma and delta subunits with a probable stoichiometry of (alpha(2)epsilon(2))(4)-beta(8)-(gamma(1)delta(1))(8).</text>
</comment>
<comment type="domain">
    <text evidence="1">Cluster B is an all-cysteinyl-liganded 4Fe-4S cluster; cluster C is a mixed Ni-Fe-S cluster which is the active site of CO oxidation. Cluster D is also an all-cysteinyl-liganded 4Fe-4S cluster that bridges the two subunits of the CODH dimer. Contains two additional 4Fe-4S clusters, dubbed E and F, that probably transport electrons from ferredoxin to the B cluster.</text>
</comment>
<comment type="similarity">
    <text evidence="1">Belongs to the Ni-containing carbon monoxide dehydrogenase family.</text>
</comment>
<feature type="initiator methionine" description="Removed" evidence="2">
    <location>
        <position position="1"/>
    </location>
</feature>
<feature type="chain" id="PRO_0000155080" description="Acetyl-CoA decarbonylase/synthase complex subunit alpha 1">
    <location>
        <begin position="2"/>
        <end position="806"/>
    </location>
</feature>
<feature type="domain" description="4Fe-4S ferredoxin-type 1" evidence="1">
    <location>
        <begin position="406"/>
        <end position="436"/>
    </location>
</feature>
<feature type="domain" description="4Fe-4S ferredoxin-type 2" evidence="1">
    <location>
        <begin position="445"/>
        <end position="475"/>
    </location>
</feature>
<feature type="binding site" evidence="1">
    <location>
        <position position="73"/>
    </location>
    <ligand>
        <name>[4Fe-4S] cluster</name>
        <dbReference type="ChEBI" id="CHEBI:49883"/>
        <label>1</label>
        <note>ligand shared between dimeric partners</note>
    </ligand>
</feature>
<feature type="binding site" evidence="1">
    <location>
        <position position="76"/>
    </location>
    <ligand>
        <name>[4Fe-4S] cluster</name>
        <dbReference type="ChEBI" id="CHEBI:49883"/>
        <label>2</label>
    </ligand>
</feature>
<feature type="binding site" evidence="1">
    <location>
        <position position="77"/>
    </location>
    <ligand>
        <name>[4Fe-4S] cluster</name>
        <dbReference type="ChEBI" id="CHEBI:49883"/>
        <label>1</label>
        <note>ligand shared between dimeric partners</note>
    </ligand>
</feature>
<feature type="binding site" evidence="1">
    <location>
        <position position="79"/>
    </location>
    <ligand>
        <name>[4Fe-4S] cluster</name>
        <dbReference type="ChEBI" id="CHEBI:49883"/>
        <label>2</label>
    </ligand>
</feature>
<feature type="binding site" evidence="1">
    <location>
        <position position="84"/>
    </location>
    <ligand>
        <name>[4Fe-4S] cluster</name>
        <dbReference type="ChEBI" id="CHEBI:49883"/>
        <label>2</label>
    </ligand>
</feature>
<feature type="binding site" evidence="1">
    <location>
        <position position="94"/>
    </location>
    <ligand>
        <name>[4Fe-4S] cluster</name>
        <dbReference type="ChEBI" id="CHEBI:49883"/>
        <label>2</label>
    </ligand>
</feature>
<feature type="binding site" evidence="1">
    <location>
        <position position="117"/>
    </location>
    <ligand>
        <name>CO</name>
        <dbReference type="ChEBI" id="CHEBI:17245"/>
    </ligand>
</feature>
<feature type="binding site" evidence="1">
    <location>
        <position position="250"/>
    </location>
    <ligand>
        <name>[Ni-4Fe-4S] cluster</name>
        <dbReference type="ChEBI" id="CHEBI:47739"/>
    </ligand>
</feature>
<feature type="binding site" evidence="1">
    <location>
        <position position="278"/>
    </location>
    <ligand>
        <name>[Ni-4Fe-4S] cluster</name>
        <dbReference type="ChEBI" id="CHEBI:47739"/>
    </ligand>
</feature>
<feature type="binding site" evidence="1">
    <location>
        <position position="323"/>
    </location>
    <ligand>
        <name>[Ni-4Fe-4S] cluster</name>
        <dbReference type="ChEBI" id="CHEBI:47739"/>
    </ligand>
</feature>
<feature type="binding site" evidence="1">
    <location>
        <position position="417"/>
    </location>
    <ligand>
        <name>[4Fe-4S] cluster</name>
        <dbReference type="ChEBI" id="CHEBI:49883"/>
        <label>3</label>
    </ligand>
</feature>
<feature type="binding site" evidence="1">
    <location>
        <position position="420"/>
    </location>
    <ligand>
        <name>[4Fe-4S] cluster</name>
        <dbReference type="ChEBI" id="CHEBI:49883"/>
        <label>3</label>
    </ligand>
</feature>
<feature type="binding site" evidence="1">
    <location>
        <position position="423"/>
    </location>
    <ligand>
        <name>[4Fe-4S] cluster</name>
        <dbReference type="ChEBI" id="CHEBI:49883"/>
        <label>3</label>
    </ligand>
</feature>
<feature type="binding site" evidence="1">
    <location>
        <position position="427"/>
    </location>
    <ligand>
        <name>[4Fe-4S] cluster</name>
        <dbReference type="ChEBI" id="CHEBI:49883"/>
        <label>4</label>
    </ligand>
</feature>
<feature type="binding site" evidence="1">
    <location>
        <position position="455"/>
    </location>
    <ligand>
        <name>[4Fe-4S] cluster</name>
        <dbReference type="ChEBI" id="CHEBI:49883"/>
        <label>4</label>
    </ligand>
</feature>
<feature type="binding site" evidence="1">
    <location>
        <position position="458"/>
    </location>
    <ligand>
        <name>[4Fe-4S] cluster</name>
        <dbReference type="ChEBI" id="CHEBI:49883"/>
        <label>4</label>
    </ligand>
</feature>
<feature type="binding site" evidence="1">
    <location>
        <position position="461"/>
    </location>
    <ligand>
        <name>[4Fe-4S] cluster</name>
        <dbReference type="ChEBI" id="CHEBI:49883"/>
        <label>4</label>
    </ligand>
</feature>
<feature type="binding site" evidence="1">
    <location>
        <position position="465"/>
    </location>
    <ligand>
        <name>[4Fe-4S] cluster</name>
        <dbReference type="ChEBI" id="CHEBI:49883"/>
        <label>3</label>
    </ligand>
</feature>
<feature type="binding site" evidence="1">
    <location>
        <position position="523"/>
    </location>
    <ligand>
        <name>[Ni-4Fe-4S] cluster</name>
        <dbReference type="ChEBI" id="CHEBI:47739"/>
    </ligand>
</feature>
<feature type="binding site" evidence="1">
    <location>
        <position position="552"/>
    </location>
    <ligand>
        <name>[Ni-4Fe-4S] cluster</name>
        <dbReference type="ChEBI" id="CHEBI:47739"/>
    </ligand>
</feature>
<feature type="binding site" evidence="1">
    <location>
        <position position="587"/>
    </location>
    <ligand>
        <name>[Ni-4Fe-4S] cluster</name>
        <dbReference type="ChEBI" id="CHEBI:47739"/>
    </ligand>
</feature>
<reference key="1">
    <citation type="journal article" date="1996" name="J. Biol. Chem.">
        <title>Carbon monoxide dehydrogenase from Methanosarcina frisia Go1. Characterization of the enzyme and the regulated expression of two operon-like cdh gene clusters.</title>
        <authorList>
            <person name="Eggen R.I.L."/>
            <person name="van Kranenburg R."/>
            <person name="Vriesema A.J.M."/>
            <person name="Geerling A.C.M."/>
            <person name="Verhagen M.F.J.M."/>
            <person name="Hagen W.R."/>
            <person name="de Vos W.M."/>
        </authorList>
    </citation>
    <scope>NUCLEOTIDE SEQUENCE [GENOMIC DNA]</scope>
    <scope>PROTEIN SEQUENCE OF 2-12</scope>
    <source>
        <strain>ATCC BAA-159 / DSM 3647 / Goe1 / Go1 / JCM 11833 / OCM 88</strain>
    </source>
</reference>
<reference key="2">
    <citation type="journal article" date="2002" name="J. Mol. Microbiol. Biotechnol.">
        <title>The genome of Methanosarcina mazei: evidence for lateral gene transfer between Bacteria and Archaea.</title>
        <authorList>
            <person name="Deppenmeier U."/>
            <person name="Johann A."/>
            <person name="Hartsch T."/>
            <person name="Merkl R."/>
            <person name="Schmitz R.A."/>
            <person name="Martinez-Arias R."/>
            <person name="Henne A."/>
            <person name="Wiezer A."/>
            <person name="Baeumer S."/>
            <person name="Jacobi C."/>
            <person name="Brueggemann H."/>
            <person name="Lienard T."/>
            <person name="Christmann A."/>
            <person name="Boemecke M."/>
            <person name="Steckel S."/>
            <person name="Bhattacharyya A."/>
            <person name="Lykidis A."/>
            <person name="Overbeek R."/>
            <person name="Klenk H.-P."/>
            <person name="Gunsalus R.P."/>
            <person name="Fritz H.-J."/>
            <person name="Gottschalk G."/>
        </authorList>
    </citation>
    <scope>NUCLEOTIDE SEQUENCE [LARGE SCALE GENOMIC DNA]</scope>
    <source>
        <strain>ATCC BAA-159 / DSM 3647 / Goe1 / Go1 / JCM 11833 / OCM 88</strain>
    </source>
</reference>
<sequence>MSKLTTGSFSIEDLESVQITINNIVGAAKEAAEEKTKELGHMGPTPFPGLETYRDDWNLKLLDRYEPVVTPMCDQCCYCTYGPCDLSNNKRGACGIDMLGHNGREFFLRVITGTACHAAHGRHLLDHLIEVFGEELPLNLGQSDVLTPNITITTGQRPQTLGEIKPAMEHVEEQLTQLLATVHAGQESAEIDYDSKALFSGSLDHVGMEISDIVQIAALDFPKADPEAPLIEMGMGTIDKDKPFLCVIGHNVGGVTYMMDYMEEHELTDKVELGGLCCTAIDLTRYKEADRRPPYTKVVGSMSKELKIIRSGMPDVIVVDEQCVRGDIVPEAQKLKIPVIASNAKIMYGLPNRTDAGVEETIEELKSGAIPGAVILDYEKLGEISVRLAQEMHPIREAAGVREIPSDEQLKEWVDKCADCGACYLACPIELDIPEAMKFAKQGDFSYLEDLHDACIGCRRCEQVCKKEIPILSVIEKASQKIIAEEKGWMRAGRGQVSDAEIRAEGLNLVMGTTPGIIAIIGCPNYSDCAKAVYYIAEEFLKRNYIVVGTGCGSMDMGMYKDEDGKTLYERFPGGFQSGGLVNIGSCVSNAHITGAAQKVAGIFGGRTMEGNLAEIADYVLNRVGACGLAWGAFSQKASSIGTGCNIYGIPAVLGAHSSKYRRALIAKNYDESKWKVYDARNGEEMPIPPAPEFLLTTAETWQEAIPMMAKACLRPSDNSLGRSIKLTHWMELHDKYIGGLPEDWWKFIRTEADLPLAKRADLMKKLEAERGWEIDWKKKKIISGPKIKFDVSAQPTNLKRLCKGA</sequence>
<accession>Q49161</accession>
<name>ACDA1_METMA</name>
<gene>
    <name evidence="1" type="primary">cdhA1</name>
    <name type="ordered locus">MM_2089</name>
</gene>
<organism>
    <name type="scientific">Methanosarcina mazei (strain ATCC BAA-159 / DSM 3647 / Goe1 / Go1 / JCM 11833 / OCM 88)</name>
    <name type="common">Methanosarcina frisia</name>
    <dbReference type="NCBI Taxonomy" id="192952"/>
    <lineage>
        <taxon>Archaea</taxon>
        <taxon>Methanobacteriati</taxon>
        <taxon>Methanobacteriota</taxon>
        <taxon>Stenosarchaea group</taxon>
        <taxon>Methanomicrobia</taxon>
        <taxon>Methanosarcinales</taxon>
        <taxon>Methanosarcinaceae</taxon>
        <taxon>Methanosarcina</taxon>
    </lineage>
</organism>
<protein>
    <recommendedName>
        <fullName evidence="1">Acetyl-CoA decarbonylase/synthase complex subunit alpha 1</fullName>
        <shortName evidence="1">ACDS complex subunit alpha 1</shortName>
        <ecNumber evidence="1">1.2.7.4</ecNumber>
    </recommendedName>
    <alternativeName>
        <fullName evidence="1">ACDS complex carbon monoxide dehydrogenase subunit alpha 1</fullName>
        <shortName evidence="1">ACDS CODH subunit alpha 1</shortName>
    </alternativeName>
</protein>
<evidence type="ECO:0000255" key="1">
    <source>
        <dbReference type="HAMAP-Rule" id="MF_01137"/>
    </source>
</evidence>
<evidence type="ECO:0000269" key="2">
    <source>
    </source>
</evidence>
<dbReference type="EC" id="1.2.7.4" evidence="1"/>
<dbReference type="EMBL" id="L26487">
    <property type="protein sequence ID" value="AAC37044.1"/>
    <property type="molecule type" value="Genomic_DNA"/>
</dbReference>
<dbReference type="EMBL" id="AE008384">
    <property type="protein sequence ID" value="AAM31785.1"/>
    <property type="molecule type" value="Genomic_DNA"/>
</dbReference>
<dbReference type="SMR" id="Q49161"/>
<dbReference type="KEGG" id="mma:MM_2089"/>
<dbReference type="PATRIC" id="fig|192952.21.peg.2398"/>
<dbReference type="eggNOG" id="arCOG02428">
    <property type="taxonomic scope" value="Archaea"/>
</dbReference>
<dbReference type="HOGENOM" id="CLU_361186_0_0_2"/>
<dbReference type="UniPathway" id="UPA00642"/>
<dbReference type="Proteomes" id="UP000000595">
    <property type="component" value="Chromosome"/>
</dbReference>
<dbReference type="GO" id="GO:0051539">
    <property type="term" value="F:4 iron, 4 sulfur cluster binding"/>
    <property type="evidence" value="ECO:0007669"/>
    <property type="project" value="UniProtKB-KW"/>
</dbReference>
<dbReference type="GO" id="GO:0043885">
    <property type="term" value="F:anaerobic carbon-monoxide dehydrogenase activity"/>
    <property type="evidence" value="ECO:0007669"/>
    <property type="project" value="UniProtKB-UniRule"/>
</dbReference>
<dbReference type="GO" id="GO:0050418">
    <property type="term" value="F:hydroxylamine reductase activity"/>
    <property type="evidence" value="ECO:0007669"/>
    <property type="project" value="TreeGrafter"/>
</dbReference>
<dbReference type="GO" id="GO:0005506">
    <property type="term" value="F:iron ion binding"/>
    <property type="evidence" value="ECO:0007669"/>
    <property type="project" value="UniProtKB-UniRule"/>
</dbReference>
<dbReference type="GO" id="GO:0016151">
    <property type="term" value="F:nickel cation binding"/>
    <property type="evidence" value="ECO:0007669"/>
    <property type="project" value="UniProtKB-UniRule"/>
</dbReference>
<dbReference type="GO" id="GO:0004601">
    <property type="term" value="F:peroxidase activity"/>
    <property type="evidence" value="ECO:0007669"/>
    <property type="project" value="TreeGrafter"/>
</dbReference>
<dbReference type="GO" id="GO:0006084">
    <property type="term" value="P:acetyl-CoA metabolic process"/>
    <property type="evidence" value="ECO:0007669"/>
    <property type="project" value="InterPro"/>
</dbReference>
<dbReference type="GO" id="GO:0019385">
    <property type="term" value="P:methanogenesis, from acetate"/>
    <property type="evidence" value="ECO:0007669"/>
    <property type="project" value="UniProtKB-UniRule"/>
</dbReference>
<dbReference type="GO" id="GO:0042542">
    <property type="term" value="P:response to hydrogen peroxide"/>
    <property type="evidence" value="ECO:0007669"/>
    <property type="project" value="TreeGrafter"/>
</dbReference>
<dbReference type="FunFam" id="1.10.8.190:FF:000001">
    <property type="entry name" value="Acetyl-CoA decarbonylase/synthase complex subunit alpha 1"/>
    <property type="match status" value="1"/>
</dbReference>
<dbReference type="FunFam" id="3.40.50.2030:FF:000004">
    <property type="entry name" value="Acetyl-CoA decarbonylase/synthase complex subunit alpha 1"/>
    <property type="match status" value="1"/>
</dbReference>
<dbReference type="FunFam" id="3.40.50.2030:FF:000006">
    <property type="entry name" value="Acetyl-CoA decarbonylase/synthase complex subunit alpha 1"/>
    <property type="match status" value="1"/>
</dbReference>
<dbReference type="FunFam" id="3.30.70.20:FF:000044">
    <property type="entry name" value="Ion-translocating oxidoreductase complex subunit C"/>
    <property type="match status" value="1"/>
</dbReference>
<dbReference type="Gene3D" id="3.30.70.20">
    <property type="match status" value="1"/>
</dbReference>
<dbReference type="Gene3D" id="3.40.50.2030">
    <property type="match status" value="2"/>
</dbReference>
<dbReference type="Gene3D" id="1.10.8.190">
    <property type="entry name" value="Carbon monoxide dehydrogenase alpha subunit. Chain M, domain 1"/>
    <property type="match status" value="1"/>
</dbReference>
<dbReference type="HAMAP" id="MF_01137">
    <property type="entry name" value="CdhA"/>
    <property type="match status" value="1"/>
</dbReference>
<dbReference type="InterPro" id="IPR017896">
    <property type="entry name" value="4Fe4S_Fe-S-bd"/>
</dbReference>
<dbReference type="InterPro" id="IPR017900">
    <property type="entry name" value="4Fe4S_Fe_S_CS"/>
</dbReference>
<dbReference type="InterPro" id="IPR004460">
    <property type="entry name" value="CdhA"/>
</dbReference>
<dbReference type="InterPro" id="IPR004137">
    <property type="entry name" value="HCP/CODH"/>
</dbReference>
<dbReference type="InterPro" id="IPR016099">
    <property type="entry name" value="Prismane-like_a/b-sand"/>
</dbReference>
<dbReference type="InterPro" id="IPR011254">
    <property type="entry name" value="Prismane-like_sf"/>
</dbReference>
<dbReference type="NCBIfam" id="TIGR00314">
    <property type="entry name" value="cdhA"/>
    <property type="match status" value="1"/>
</dbReference>
<dbReference type="PANTHER" id="PTHR30109:SF6">
    <property type="entry name" value="ACETYL-COA DECARBONYLASE_SYNTHASE COMPLEX SUBUNIT ALPHA"/>
    <property type="match status" value="1"/>
</dbReference>
<dbReference type="PANTHER" id="PTHR30109">
    <property type="entry name" value="HYDROXYLAMINE REDUCTASE"/>
    <property type="match status" value="1"/>
</dbReference>
<dbReference type="Pfam" id="PF03063">
    <property type="entry name" value="Prismane"/>
    <property type="match status" value="2"/>
</dbReference>
<dbReference type="SUPFAM" id="SSF46548">
    <property type="entry name" value="alpha-helical ferredoxin"/>
    <property type="match status" value="1"/>
</dbReference>
<dbReference type="SUPFAM" id="SSF56821">
    <property type="entry name" value="Prismane protein-like"/>
    <property type="match status" value="1"/>
</dbReference>
<dbReference type="PROSITE" id="PS00198">
    <property type="entry name" value="4FE4S_FER_1"/>
    <property type="match status" value="1"/>
</dbReference>
<dbReference type="PROSITE" id="PS51379">
    <property type="entry name" value="4FE4S_FER_2"/>
    <property type="match status" value="2"/>
</dbReference>
<proteinExistence type="evidence at protein level"/>